<sequence length="229" mass="25482">MFKKMLLVDPKMRKEKQIKKHNMKRHPLSSAGVDDVSMLKSLTKSSINRDIVSKIIKESAGRELQGHEKLQIQSALRDIESAENQARVQQCNAKCISEVMEVGRMAAMATSATLVLVEQSKLSEKKLERSEKVAKRVGKIESLNEKLDLAGGIGTRMYEAVGELTDIFDPSAYSEEKSNGILSTSQERILNEIQAKVQSDVYMNLPSVPLNSTLSLGEAEKSITEKLYL</sequence>
<dbReference type="EMBL" id="AY509253">
    <property type="protein sequence ID" value="AAS00978.1"/>
    <property type="molecule type" value="Genomic_DNA"/>
</dbReference>
<dbReference type="RefSeq" id="YP_024631.1">
    <property type="nucleotide sequence ID" value="NC_005881.2"/>
</dbReference>
<dbReference type="KEGG" id="vg:2948253"/>
<dbReference type="Proteomes" id="UP000007021">
    <property type="component" value="Segment"/>
</dbReference>
<feature type="chain" id="PRO_0000385112" description="Uncharacterized protein ORF92">
    <location>
        <begin position="1"/>
        <end position="229"/>
    </location>
</feature>
<feature type="coiled-coil region" evidence="1">
    <location>
        <begin position="66"/>
        <end position="94"/>
    </location>
</feature>
<name>Y092_OSHVF</name>
<evidence type="ECO:0000255" key="1"/>
<organism>
    <name type="scientific">Ostreid herpesvirus 1 (isolate France)</name>
    <name type="common">OsHV-1</name>
    <name type="synonym">Pacific oyster herpesvirus</name>
    <dbReference type="NCBI Taxonomy" id="654903"/>
    <lineage>
        <taxon>Viruses</taxon>
        <taxon>Duplodnaviria</taxon>
        <taxon>Heunggongvirae</taxon>
        <taxon>Peploviricota</taxon>
        <taxon>Herviviricetes</taxon>
        <taxon>Herpesvirales</taxon>
        <taxon>Malacoherpesviridae</taxon>
        <taxon>Ostreavirus</taxon>
        <taxon>Ostreavirus ostreidmalaco1</taxon>
        <taxon>Ostreid herpesvirus 1</taxon>
    </lineage>
</organism>
<organismHost>
    <name type="scientific">Magallana gigas</name>
    <name type="common">Pacific oyster</name>
    <name type="synonym">Crassostrea gigas</name>
    <dbReference type="NCBI Taxonomy" id="29159"/>
</organismHost>
<organismHost>
    <name type="scientific">Pecten maximus</name>
    <name type="common">King scallop</name>
    <name type="synonym">Pilgrim's clam</name>
    <dbReference type="NCBI Taxonomy" id="6579"/>
</organismHost>
<proteinExistence type="predicted"/>
<keyword id="KW-0175">Coiled coil</keyword>
<keyword id="KW-1185">Reference proteome</keyword>
<protein>
    <recommendedName>
        <fullName>Uncharacterized protein ORF92</fullName>
    </recommendedName>
</protein>
<reference key="1">
    <citation type="journal article" date="2005" name="J. Gen. Virol.">
        <title>A novel class of herpesvirus with bivalve hosts.</title>
        <authorList>
            <person name="Davison A.J."/>
            <person name="Trus B.L."/>
            <person name="Cheng N."/>
            <person name="Steven A.C."/>
            <person name="Watson M.S."/>
            <person name="Cunningham C."/>
            <person name="Le Deuff R.M."/>
            <person name="Renault T."/>
        </authorList>
    </citation>
    <scope>NUCLEOTIDE SEQUENCE [LARGE SCALE GENOMIC DNA]</scope>
</reference>
<gene>
    <name type="ORF">ORF92</name>
</gene>
<accession>Q6R7D7</accession>